<feature type="chain" id="PRO_1000030505" description="D-alanine--D-alanine ligase">
    <location>
        <begin position="1"/>
        <end position="348"/>
    </location>
</feature>
<feature type="domain" description="ATP-grasp" evidence="2">
    <location>
        <begin position="132"/>
        <end position="334"/>
    </location>
</feature>
<feature type="binding site" evidence="2">
    <location>
        <begin position="162"/>
        <end position="217"/>
    </location>
    <ligand>
        <name>ATP</name>
        <dbReference type="ChEBI" id="CHEBI:30616"/>
    </ligand>
</feature>
<feature type="binding site" evidence="2">
    <location>
        <position position="288"/>
    </location>
    <ligand>
        <name>Mg(2+)</name>
        <dbReference type="ChEBI" id="CHEBI:18420"/>
        <label>1</label>
    </ligand>
</feature>
<feature type="binding site" evidence="2">
    <location>
        <position position="301"/>
    </location>
    <ligand>
        <name>Mg(2+)</name>
        <dbReference type="ChEBI" id="CHEBI:18420"/>
        <label>1</label>
    </ligand>
</feature>
<feature type="binding site" evidence="2">
    <location>
        <position position="301"/>
    </location>
    <ligand>
        <name>Mg(2+)</name>
        <dbReference type="ChEBI" id="CHEBI:18420"/>
        <label>2</label>
    </ligand>
</feature>
<feature type="binding site" evidence="2">
    <location>
        <position position="303"/>
    </location>
    <ligand>
        <name>Mg(2+)</name>
        <dbReference type="ChEBI" id="CHEBI:18420"/>
        <label>2</label>
    </ligand>
</feature>
<protein>
    <recommendedName>
        <fullName evidence="2">D-alanine--D-alanine ligase</fullName>
        <ecNumber evidence="2">6.3.2.4</ecNumber>
    </recommendedName>
    <alternativeName>
        <fullName evidence="2">D-Ala-D-Ala ligase</fullName>
    </alternativeName>
    <alternativeName>
        <fullName evidence="2">D-alanylalanine synthetase</fullName>
    </alternativeName>
</protein>
<accession>Q48SP8</accession>
<dbReference type="EC" id="6.3.2.4" evidence="2"/>
<dbReference type="EMBL" id="CP000056">
    <property type="protein sequence ID" value="AAX72262.1"/>
    <property type="molecule type" value="Genomic_DNA"/>
</dbReference>
<dbReference type="RefSeq" id="WP_002989146.1">
    <property type="nucleotide sequence ID" value="NC_007296.2"/>
</dbReference>
<dbReference type="SMR" id="Q48SP8"/>
<dbReference type="KEGG" id="spb:M28_Spy1152"/>
<dbReference type="HOGENOM" id="CLU_039268_0_0_9"/>
<dbReference type="UniPathway" id="UPA00219"/>
<dbReference type="GO" id="GO:0005829">
    <property type="term" value="C:cytosol"/>
    <property type="evidence" value="ECO:0007669"/>
    <property type="project" value="TreeGrafter"/>
</dbReference>
<dbReference type="GO" id="GO:0005524">
    <property type="term" value="F:ATP binding"/>
    <property type="evidence" value="ECO:0007669"/>
    <property type="project" value="UniProtKB-KW"/>
</dbReference>
<dbReference type="GO" id="GO:0008716">
    <property type="term" value="F:D-alanine-D-alanine ligase activity"/>
    <property type="evidence" value="ECO:0007669"/>
    <property type="project" value="UniProtKB-UniRule"/>
</dbReference>
<dbReference type="GO" id="GO:0046872">
    <property type="term" value="F:metal ion binding"/>
    <property type="evidence" value="ECO:0007669"/>
    <property type="project" value="UniProtKB-KW"/>
</dbReference>
<dbReference type="GO" id="GO:0071555">
    <property type="term" value="P:cell wall organization"/>
    <property type="evidence" value="ECO:0007669"/>
    <property type="project" value="UniProtKB-KW"/>
</dbReference>
<dbReference type="GO" id="GO:0009252">
    <property type="term" value="P:peptidoglycan biosynthetic process"/>
    <property type="evidence" value="ECO:0007669"/>
    <property type="project" value="UniProtKB-UniRule"/>
</dbReference>
<dbReference type="GO" id="GO:0008360">
    <property type="term" value="P:regulation of cell shape"/>
    <property type="evidence" value="ECO:0007669"/>
    <property type="project" value="UniProtKB-KW"/>
</dbReference>
<dbReference type="FunFam" id="3.30.1490.20:FF:000007">
    <property type="entry name" value="D-alanine--D-alanine ligase"/>
    <property type="match status" value="1"/>
</dbReference>
<dbReference type="FunFam" id="3.30.470.20:FF:000008">
    <property type="entry name" value="D-alanine--D-alanine ligase"/>
    <property type="match status" value="1"/>
</dbReference>
<dbReference type="Gene3D" id="3.40.50.20">
    <property type="match status" value="1"/>
</dbReference>
<dbReference type="Gene3D" id="3.30.1490.20">
    <property type="entry name" value="ATP-grasp fold, A domain"/>
    <property type="match status" value="1"/>
</dbReference>
<dbReference type="Gene3D" id="3.30.470.20">
    <property type="entry name" value="ATP-grasp fold, B domain"/>
    <property type="match status" value="1"/>
</dbReference>
<dbReference type="HAMAP" id="MF_00047">
    <property type="entry name" value="Dala_Dala_lig"/>
    <property type="match status" value="1"/>
</dbReference>
<dbReference type="InterPro" id="IPR011761">
    <property type="entry name" value="ATP-grasp"/>
</dbReference>
<dbReference type="InterPro" id="IPR013815">
    <property type="entry name" value="ATP_grasp_subdomain_1"/>
</dbReference>
<dbReference type="InterPro" id="IPR000291">
    <property type="entry name" value="D-Ala_lig_Van_CS"/>
</dbReference>
<dbReference type="InterPro" id="IPR005905">
    <property type="entry name" value="D_ala_D_ala"/>
</dbReference>
<dbReference type="InterPro" id="IPR011095">
    <property type="entry name" value="Dala_Dala_lig_C"/>
</dbReference>
<dbReference type="InterPro" id="IPR011127">
    <property type="entry name" value="Dala_Dala_lig_N"/>
</dbReference>
<dbReference type="InterPro" id="IPR016185">
    <property type="entry name" value="PreATP-grasp_dom_sf"/>
</dbReference>
<dbReference type="NCBIfam" id="TIGR01205">
    <property type="entry name" value="D_ala_D_alaTIGR"/>
    <property type="match status" value="1"/>
</dbReference>
<dbReference type="NCBIfam" id="NF002528">
    <property type="entry name" value="PRK01966.1-4"/>
    <property type="match status" value="1"/>
</dbReference>
<dbReference type="NCBIfam" id="NF002529">
    <property type="entry name" value="PRK01966.1-5"/>
    <property type="match status" value="1"/>
</dbReference>
<dbReference type="PANTHER" id="PTHR23132">
    <property type="entry name" value="D-ALANINE--D-ALANINE LIGASE"/>
    <property type="match status" value="1"/>
</dbReference>
<dbReference type="PANTHER" id="PTHR23132:SF25">
    <property type="entry name" value="D-ALANINE--D-ALANINE LIGASE A"/>
    <property type="match status" value="1"/>
</dbReference>
<dbReference type="Pfam" id="PF07478">
    <property type="entry name" value="Dala_Dala_lig_C"/>
    <property type="match status" value="1"/>
</dbReference>
<dbReference type="Pfam" id="PF01820">
    <property type="entry name" value="Dala_Dala_lig_N"/>
    <property type="match status" value="1"/>
</dbReference>
<dbReference type="PIRSF" id="PIRSF039102">
    <property type="entry name" value="Ddl/VanB"/>
    <property type="match status" value="1"/>
</dbReference>
<dbReference type="SUPFAM" id="SSF56059">
    <property type="entry name" value="Glutathione synthetase ATP-binding domain-like"/>
    <property type="match status" value="1"/>
</dbReference>
<dbReference type="SUPFAM" id="SSF52440">
    <property type="entry name" value="PreATP-grasp domain"/>
    <property type="match status" value="1"/>
</dbReference>
<dbReference type="PROSITE" id="PS50975">
    <property type="entry name" value="ATP_GRASP"/>
    <property type="match status" value="1"/>
</dbReference>
<dbReference type="PROSITE" id="PS00843">
    <property type="entry name" value="DALA_DALA_LIGASE_1"/>
    <property type="match status" value="1"/>
</dbReference>
<dbReference type="PROSITE" id="PS00844">
    <property type="entry name" value="DALA_DALA_LIGASE_2"/>
    <property type="match status" value="1"/>
</dbReference>
<name>DDL_STRPM</name>
<proteinExistence type="inferred from homology"/>
<reference key="1">
    <citation type="journal article" date="2005" name="J. Infect. Dis.">
        <title>Genome sequence of a serotype M28 strain of group A Streptococcus: potential new insights into puerperal sepsis and bacterial disease specificity.</title>
        <authorList>
            <person name="Green N.M."/>
            <person name="Zhang S."/>
            <person name="Porcella S.F."/>
            <person name="Nagiec M.J."/>
            <person name="Barbian K.D."/>
            <person name="Beres S.B."/>
            <person name="Lefebvre R.B."/>
            <person name="Musser J.M."/>
        </authorList>
    </citation>
    <scope>NUCLEOTIDE SEQUENCE [LARGE SCALE GENOMIC DNA]</scope>
    <source>
        <strain>MGAS6180</strain>
    </source>
</reference>
<gene>
    <name evidence="2" type="primary">ddl</name>
    <name type="ordered locus">M28_Spy1152</name>
</gene>
<evidence type="ECO:0000250" key="1"/>
<evidence type="ECO:0000255" key="2">
    <source>
        <dbReference type="HAMAP-Rule" id="MF_00047"/>
    </source>
</evidence>
<comment type="function">
    <text evidence="2">Cell wall formation.</text>
</comment>
<comment type="catalytic activity">
    <reaction evidence="2">
        <text>2 D-alanine + ATP = D-alanyl-D-alanine + ADP + phosphate + H(+)</text>
        <dbReference type="Rhea" id="RHEA:11224"/>
        <dbReference type="ChEBI" id="CHEBI:15378"/>
        <dbReference type="ChEBI" id="CHEBI:30616"/>
        <dbReference type="ChEBI" id="CHEBI:43474"/>
        <dbReference type="ChEBI" id="CHEBI:57416"/>
        <dbReference type="ChEBI" id="CHEBI:57822"/>
        <dbReference type="ChEBI" id="CHEBI:456216"/>
        <dbReference type="EC" id="6.3.2.4"/>
    </reaction>
</comment>
<comment type="cofactor">
    <cofactor evidence="1">
        <name>Mg(2+)</name>
        <dbReference type="ChEBI" id="CHEBI:18420"/>
    </cofactor>
    <cofactor evidence="1">
        <name>Mn(2+)</name>
        <dbReference type="ChEBI" id="CHEBI:29035"/>
    </cofactor>
    <text evidence="1">Binds 2 magnesium or manganese ions per subunit.</text>
</comment>
<comment type="pathway">
    <text evidence="2">Cell wall biogenesis; peptidoglycan biosynthesis.</text>
</comment>
<comment type="subcellular location">
    <subcellularLocation>
        <location evidence="2">Cytoplasm</location>
    </subcellularLocation>
</comment>
<comment type="similarity">
    <text evidence="2">Belongs to the D-alanine--D-alanine ligase family.</text>
</comment>
<keyword id="KW-0067">ATP-binding</keyword>
<keyword id="KW-0133">Cell shape</keyword>
<keyword id="KW-0961">Cell wall biogenesis/degradation</keyword>
<keyword id="KW-0963">Cytoplasm</keyword>
<keyword id="KW-0436">Ligase</keyword>
<keyword id="KW-0460">Magnesium</keyword>
<keyword id="KW-0464">Manganese</keyword>
<keyword id="KW-0479">Metal-binding</keyword>
<keyword id="KW-0547">Nucleotide-binding</keyword>
<keyword id="KW-0573">Peptidoglycan synthesis</keyword>
<organism>
    <name type="scientific">Streptococcus pyogenes serotype M28 (strain MGAS6180)</name>
    <dbReference type="NCBI Taxonomy" id="319701"/>
    <lineage>
        <taxon>Bacteria</taxon>
        <taxon>Bacillati</taxon>
        <taxon>Bacillota</taxon>
        <taxon>Bacilli</taxon>
        <taxon>Lactobacillales</taxon>
        <taxon>Streptococcaceae</taxon>
        <taxon>Streptococcus</taxon>
    </lineage>
</organism>
<sequence>MSKQTLVLLYGGRSAEREVSVLSAESVMRAVNYDKFLVKTYFITQMGQFIKTQQFSEKPSESERLMTNETIELTQKIKPSDIYEEGAVVFPVLHGPMGEDGSIQGFLEVLRMPYIGTNVMSSSIAMDKITTKRVLESIGIPQVAYTVYIDGQDLEACLVETLARLTFPIFVKPANMGSSVGISKAQTKVELRKAIQLALTYDSRVLIEQGVVAREIEVGLLGNDKVKSTLPGEVIKDVDFYDYQAKYVDNKITMAIPADVDQSIVTEMRSYAEVAFKALGGCGLSRCDFFLTQDGQVYLNELNTMPGFTQWSMYPLLWENMGLAYPDLIEELVTLAQEMFDQRESHLI</sequence>